<organism>
    <name type="scientific">Listeria welshimeri serovar 6b (strain ATCC 35897 / DSM 20650 / CCUG 15529 / CIP 8149 / NCTC 11857 / SLCC 5334 / V8)</name>
    <dbReference type="NCBI Taxonomy" id="386043"/>
    <lineage>
        <taxon>Bacteria</taxon>
        <taxon>Bacillati</taxon>
        <taxon>Bacillota</taxon>
        <taxon>Bacilli</taxon>
        <taxon>Bacillales</taxon>
        <taxon>Listeriaceae</taxon>
        <taxon>Listeria</taxon>
    </lineage>
</organism>
<comment type="function">
    <text evidence="1">Site-specific tyrosine recombinase, which acts by catalyzing the cutting and rejoining of the recombining DNA molecules. The XerC-XerD complex is essential to convert dimers of the bacterial chromosome into monomers to permit their segregation at cell division. It also contributes to the segregational stability of plasmids.</text>
</comment>
<comment type="subunit">
    <text evidence="1">Forms a cyclic heterotetrameric complex composed of two molecules of XerC and two molecules of XerD.</text>
</comment>
<comment type="subcellular location">
    <subcellularLocation>
        <location evidence="1">Cytoplasm</location>
    </subcellularLocation>
</comment>
<comment type="similarity">
    <text evidence="1">Belongs to the 'phage' integrase family. XerC subfamily.</text>
</comment>
<accession>A0AI80</accession>
<feature type="chain" id="PRO_1000070010" description="Tyrosine recombinase XerC">
    <location>
        <begin position="1"/>
        <end position="300"/>
    </location>
</feature>
<feature type="domain" description="Core-binding (CB)" evidence="3">
    <location>
        <begin position="2"/>
        <end position="88"/>
    </location>
</feature>
<feature type="domain" description="Tyr recombinase" evidence="2">
    <location>
        <begin position="109"/>
        <end position="294"/>
    </location>
</feature>
<feature type="active site" evidence="1">
    <location>
        <position position="150"/>
    </location>
</feature>
<feature type="active site" evidence="1">
    <location>
        <position position="174"/>
    </location>
</feature>
<feature type="active site" evidence="1">
    <location>
        <position position="246"/>
    </location>
</feature>
<feature type="active site" evidence="1">
    <location>
        <position position="249"/>
    </location>
</feature>
<feature type="active site" evidence="1">
    <location>
        <position position="272"/>
    </location>
</feature>
<feature type="active site" description="O-(3'-phospho-DNA)-tyrosine intermediate" evidence="1">
    <location>
        <position position="281"/>
    </location>
</feature>
<evidence type="ECO:0000255" key="1">
    <source>
        <dbReference type="HAMAP-Rule" id="MF_01808"/>
    </source>
</evidence>
<evidence type="ECO:0000255" key="2">
    <source>
        <dbReference type="PROSITE-ProRule" id="PRU01246"/>
    </source>
</evidence>
<evidence type="ECO:0000255" key="3">
    <source>
        <dbReference type="PROSITE-ProRule" id="PRU01248"/>
    </source>
</evidence>
<dbReference type="EMBL" id="AM263198">
    <property type="protein sequence ID" value="CAK20712.1"/>
    <property type="molecule type" value="Genomic_DNA"/>
</dbReference>
<dbReference type="RefSeq" id="WP_011702103.1">
    <property type="nucleotide sequence ID" value="NC_008555.1"/>
</dbReference>
<dbReference type="SMR" id="A0AI80"/>
<dbReference type="STRING" id="386043.lwe1294"/>
<dbReference type="GeneID" id="61189171"/>
<dbReference type="KEGG" id="lwe:lwe1294"/>
<dbReference type="eggNOG" id="COG4974">
    <property type="taxonomic scope" value="Bacteria"/>
</dbReference>
<dbReference type="HOGENOM" id="CLU_027562_9_0_9"/>
<dbReference type="OrthoDB" id="9801717at2"/>
<dbReference type="Proteomes" id="UP000000779">
    <property type="component" value="Chromosome"/>
</dbReference>
<dbReference type="GO" id="GO:0005737">
    <property type="term" value="C:cytoplasm"/>
    <property type="evidence" value="ECO:0007669"/>
    <property type="project" value="UniProtKB-SubCell"/>
</dbReference>
<dbReference type="GO" id="GO:0003677">
    <property type="term" value="F:DNA binding"/>
    <property type="evidence" value="ECO:0007669"/>
    <property type="project" value="UniProtKB-KW"/>
</dbReference>
<dbReference type="GO" id="GO:0009037">
    <property type="term" value="F:tyrosine-based site-specific recombinase activity"/>
    <property type="evidence" value="ECO:0007669"/>
    <property type="project" value="UniProtKB-UniRule"/>
</dbReference>
<dbReference type="GO" id="GO:0051301">
    <property type="term" value="P:cell division"/>
    <property type="evidence" value="ECO:0007669"/>
    <property type="project" value="UniProtKB-KW"/>
</dbReference>
<dbReference type="GO" id="GO:0007059">
    <property type="term" value="P:chromosome segregation"/>
    <property type="evidence" value="ECO:0007669"/>
    <property type="project" value="UniProtKB-UniRule"/>
</dbReference>
<dbReference type="GO" id="GO:0006313">
    <property type="term" value="P:DNA transposition"/>
    <property type="evidence" value="ECO:0007669"/>
    <property type="project" value="UniProtKB-UniRule"/>
</dbReference>
<dbReference type="CDD" id="cd00798">
    <property type="entry name" value="INT_XerDC_C"/>
    <property type="match status" value="1"/>
</dbReference>
<dbReference type="Gene3D" id="1.10.150.130">
    <property type="match status" value="1"/>
</dbReference>
<dbReference type="Gene3D" id="1.10.443.10">
    <property type="entry name" value="Intergrase catalytic core"/>
    <property type="match status" value="1"/>
</dbReference>
<dbReference type="HAMAP" id="MF_01808">
    <property type="entry name" value="Recomb_XerC_XerD"/>
    <property type="match status" value="1"/>
</dbReference>
<dbReference type="InterPro" id="IPR044068">
    <property type="entry name" value="CB"/>
</dbReference>
<dbReference type="InterPro" id="IPR011010">
    <property type="entry name" value="DNA_brk_join_enz"/>
</dbReference>
<dbReference type="InterPro" id="IPR013762">
    <property type="entry name" value="Integrase-like_cat_sf"/>
</dbReference>
<dbReference type="InterPro" id="IPR002104">
    <property type="entry name" value="Integrase_catalytic"/>
</dbReference>
<dbReference type="InterPro" id="IPR010998">
    <property type="entry name" value="Integrase_recombinase_N"/>
</dbReference>
<dbReference type="InterPro" id="IPR004107">
    <property type="entry name" value="Integrase_SAM-like_N"/>
</dbReference>
<dbReference type="InterPro" id="IPR011931">
    <property type="entry name" value="Recomb_XerC"/>
</dbReference>
<dbReference type="InterPro" id="IPR023009">
    <property type="entry name" value="Tyrosine_recombinase_XerC/XerD"/>
</dbReference>
<dbReference type="InterPro" id="IPR050090">
    <property type="entry name" value="Tyrosine_recombinase_XerCD"/>
</dbReference>
<dbReference type="NCBIfam" id="NF001399">
    <property type="entry name" value="PRK00283.1"/>
    <property type="match status" value="1"/>
</dbReference>
<dbReference type="NCBIfam" id="TIGR02224">
    <property type="entry name" value="recomb_XerC"/>
    <property type="match status" value="1"/>
</dbReference>
<dbReference type="PANTHER" id="PTHR30349">
    <property type="entry name" value="PHAGE INTEGRASE-RELATED"/>
    <property type="match status" value="1"/>
</dbReference>
<dbReference type="PANTHER" id="PTHR30349:SF77">
    <property type="entry name" value="TYROSINE RECOMBINASE XERC"/>
    <property type="match status" value="1"/>
</dbReference>
<dbReference type="Pfam" id="PF02899">
    <property type="entry name" value="Phage_int_SAM_1"/>
    <property type="match status" value="1"/>
</dbReference>
<dbReference type="Pfam" id="PF00589">
    <property type="entry name" value="Phage_integrase"/>
    <property type="match status" value="1"/>
</dbReference>
<dbReference type="SUPFAM" id="SSF56349">
    <property type="entry name" value="DNA breaking-rejoining enzymes"/>
    <property type="match status" value="1"/>
</dbReference>
<dbReference type="PROSITE" id="PS51900">
    <property type="entry name" value="CB"/>
    <property type="match status" value="1"/>
</dbReference>
<dbReference type="PROSITE" id="PS51898">
    <property type="entry name" value="TYR_RECOMBINASE"/>
    <property type="match status" value="1"/>
</dbReference>
<name>XERC_LISW6</name>
<sequence length="300" mass="34993">MTQEGKLEQQFLNYLHSERNYSVNTSTAYENDILDFRRFLNEQAISEYQQVTFLDVRIYLTELKQKSFSRTTVARKISSLRSFYTFLLRENVISENPFTYVSHAKNQLRLPKFFYSEEMEALFQVVYEDNETLTLRDRVLLEVLYGTGIRVSECAGILLSDLDTSYQAILIRGKGNKERYVPFGAYAEDAITDYLSSRTELMIRFKKEHDSLLINHYGDPLTTRGIRYCLTKIISKASLTRKIHPHMLRHTFATDLLNNGADMRTVQELLGHASLSSTQIYTHVTKEHLKSTYMKHHPRA</sequence>
<reference key="1">
    <citation type="journal article" date="2006" name="J. Bacteriol.">
        <title>Whole-genome sequence of Listeria welshimeri reveals common steps in genome reduction with Listeria innocua as compared to Listeria monocytogenes.</title>
        <authorList>
            <person name="Hain T."/>
            <person name="Steinweg C."/>
            <person name="Kuenne C.T."/>
            <person name="Billion A."/>
            <person name="Ghai R."/>
            <person name="Chatterjee S.S."/>
            <person name="Domann E."/>
            <person name="Kaerst U."/>
            <person name="Goesmann A."/>
            <person name="Bekel T."/>
            <person name="Bartels D."/>
            <person name="Kaiser O."/>
            <person name="Meyer F."/>
            <person name="Puehler A."/>
            <person name="Weisshaar B."/>
            <person name="Wehland J."/>
            <person name="Liang C."/>
            <person name="Dandekar T."/>
            <person name="Lampidis R."/>
            <person name="Kreft J."/>
            <person name="Goebel W."/>
            <person name="Chakraborty T."/>
        </authorList>
    </citation>
    <scope>NUCLEOTIDE SEQUENCE [LARGE SCALE GENOMIC DNA]</scope>
    <source>
        <strain>ATCC 35897 / DSM 20650 / CCUG 15529 / CIP 8149 / NCTC 11857 / SLCC 5334 / V8</strain>
    </source>
</reference>
<proteinExistence type="inferred from homology"/>
<gene>
    <name evidence="1" type="primary">xerC</name>
    <name type="ordered locus">lwe1294</name>
</gene>
<protein>
    <recommendedName>
        <fullName evidence="1">Tyrosine recombinase XerC</fullName>
    </recommendedName>
</protein>
<keyword id="KW-0131">Cell cycle</keyword>
<keyword id="KW-0132">Cell division</keyword>
<keyword id="KW-0159">Chromosome partition</keyword>
<keyword id="KW-0963">Cytoplasm</keyword>
<keyword id="KW-0229">DNA integration</keyword>
<keyword id="KW-0233">DNA recombination</keyword>
<keyword id="KW-0238">DNA-binding</keyword>